<gene>
    <name type="primary">nasB</name>
    <name type="synonym">nasBA</name>
    <name type="ordered locus">BSU03320</name>
</gene>
<evidence type="ECO:0000250" key="1">
    <source>
        <dbReference type="UniProtKB" id="P05340"/>
    </source>
</evidence>
<evidence type="ECO:0000255" key="2"/>
<evidence type="ECO:0000269" key="3">
    <source>
    </source>
</evidence>
<evidence type="ECO:0000269" key="4">
    <source>
    </source>
</evidence>
<evidence type="ECO:0000269" key="5">
    <source>
    </source>
</evidence>
<evidence type="ECO:0000305" key="6"/>
<accession>P42433</accession>
<organism>
    <name type="scientific">Bacillus subtilis (strain 168)</name>
    <dbReference type="NCBI Taxonomy" id="224308"/>
    <lineage>
        <taxon>Bacteria</taxon>
        <taxon>Bacillati</taxon>
        <taxon>Bacillota</taxon>
        <taxon>Bacilli</taxon>
        <taxon>Bacillales</taxon>
        <taxon>Bacillaceae</taxon>
        <taxon>Bacillus</taxon>
    </lineage>
</organism>
<protein>
    <recommendedName>
        <fullName>Assimilatory nitrate reductase electron transfer subunit</fullName>
    </recommendedName>
</protein>
<comment type="function">
    <text evidence="5">Required for nitrate assimilation.</text>
</comment>
<comment type="cofactor">
    <cofactor evidence="6">
        <name>FAD</name>
        <dbReference type="ChEBI" id="CHEBI:57692"/>
    </cofactor>
</comment>
<comment type="cofactor">
    <cofactor evidence="1">
        <name>[2Fe-2S] cluster</name>
        <dbReference type="ChEBI" id="CHEBI:190135"/>
    </cofactor>
    <text evidence="1">Binds 1 [2Fe-2S] cluster per subunit.</text>
</comment>
<comment type="induction">
    <text evidence="3 4">Positively regulated by TnrA under nitrogen-limited conditions.</text>
</comment>
<feature type="chain" id="PRO_0000096736" description="Assimilatory nitrate reductase electron transfer subunit">
    <location>
        <begin position="1"/>
        <end position="771"/>
    </location>
</feature>
<feature type="binding site" evidence="2">
    <location>
        <begin position="43"/>
        <end position="79"/>
    </location>
    <ligand>
        <name>FAD</name>
        <dbReference type="ChEBI" id="CHEBI:57692"/>
    </ligand>
</feature>
<feature type="binding site" evidence="1">
    <location>
        <position position="414"/>
    </location>
    <ligand>
        <name>[2Fe-2S] cluster</name>
        <dbReference type="ChEBI" id="CHEBI:190135"/>
    </ligand>
</feature>
<feature type="binding site" evidence="1">
    <location>
        <position position="416"/>
    </location>
    <ligand>
        <name>[2Fe-2S] cluster</name>
        <dbReference type="ChEBI" id="CHEBI:190135"/>
    </ligand>
</feature>
<feature type="binding site" evidence="1">
    <location>
        <position position="449"/>
    </location>
    <ligand>
        <name>[2Fe-2S] cluster</name>
        <dbReference type="ChEBI" id="CHEBI:190135"/>
    </ligand>
</feature>
<feature type="binding site" evidence="1">
    <location>
        <position position="452"/>
    </location>
    <ligand>
        <name>[2Fe-2S] cluster</name>
        <dbReference type="ChEBI" id="CHEBI:190135"/>
    </ligand>
</feature>
<feature type="sequence conflict" description="In Ref. 1; BAA06352 and 2; BAA08966." evidence="6" ref="1 2">
    <original>AG</original>
    <variation>R</variation>
    <location>
        <begin position="363"/>
        <end position="364"/>
    </location>
</feature>
<feature type="sequence conflict" description="In Ref. 1; BAA06352 and 2; BAA08966." evidence="6" ref="1 2">
    <original>A</original>
    <variation>D</variation>
    <location>
        <position position="716"/>
    </location>
</feature>
<dbReference type="EMBL" id="D30689">
    <property type="protein sequence ID" value="BAA06352.1"/>
    <property type="molecule type" value="Genomic_DNA"/>
</dbReference>
<dbReference type="EMBL" id="D50453">
    <property type="protein sequence ID" value="BAA08966.1"/>
    <property type="molecule type" value="Genomic_DNA"/>
</dbReference>
<dbReference type="EMBL" id="AL009126">
    <property type="protein sequence ID" value="CAB12126.2"/>
    <property type="molecule type" value="Genomic_DNA"/>
</dbReference>
<dbReference type="PIR" id="I40027">
    <property type="entry name" value="I40027"/>
</dbReference>
<dbReference type="RefSeq" id="NP_388214.2">
    <property type="nucleotide sequence ID" value="NC_000964.3"/>
</dbReference>
<dbReference type="RefSeq" id="WP_003246389.1">
    <property type="nucleotide sequence ID" value="NZ_OZ025638.1"/>
</dbReference>
<dbReference type="SMR" id="P42433"/>
<dbReference type="FunCoup" id="P42433">
    <property type="interactions" value="387"/>
</dbReference>
<dbReference type="STRING" id="224308.BSU03320"/>
<dbReference type="PaxDb" id="224308-BSU03320"/>
<dbReference type="EnsemblBacteria" id="CAB12126">
    <property type="protein sequence ID" value="CAB12126"/>
    <property type="gene ID" value="BSU_03320"/>
</dbReference>
<dbReference type="GeneID" id="938328"/>
<dbReference type="KEGG" id="bsu:BSU03320"/>
<dbReference type="PATRIC" id="fig|224308.179.peg.346"/>
<dbReference type="eggNOG" id="COG1251">
    <property type="taxonomic scope" value="Bacteria"/>
</dbReference>
<dbReference type="InParanoid" id="P42433"/>
<dbReference type="OrthoDB" id="9802028at2"/>
<dbReference type="PhylomeDB" id="P42433"/>
<dbReference type="BioCyc" id="BSUB:BSU03320-MONOMER"/>
<dbReference type="Proteomes" id="UP000001570">
    <property type="component" value="Chromosome"/>
</dbReference>
<dbReference type="GO" id="GO:0051537">
    <property type="term" value="F:2 iron, 2 sulfur cluster binding"/>
    <property type="evidence" value="ECO:0007669"/>
    <property type="project" value="UniProtKB-KW"/>
</dbReference>
<dbReference type="GO" id="GO:0050660">
    <property type="term" value="F:flavin adenine dinucleotide binding"/>
    <property type="evidence" value="ECO:0007669"/>
    <property type="project" value="InterPro"/>
</dbReference>
<dbReference type="GO" id="GO:0020037">
    <property type="term" value="F:heme binding"/>
    <property type="evidence" value="ECO:0007669"/>
    <property type="project" value="InterPro"/>
</dbReference>
<dbReference type="GO" id="GO:0046872">
    <property type="term" value="F:metal ion binding"/>
    <property type="evidence" value="ECO:0007669"/>
    <property type="project" value="UniProtKB-KW"/>
</dbReference>
<dbReference type="GO" id="GO:0050661">
    <property type="term" value="F:NADP binding"/>
    <property type="evidence" value="ECO:0007669"/>
    <property type="project" value="InterPro"/>
</dbReference>
<dbReference type="GO" id="GO:0098809">
    <property type="term" value="F:nitrite reductase activity"/>
    <property type="evidence" value="ECO:0007669"/>
    <property type="project" value="InterPro"/>
</dbReference>
<dbReference type="GO" id="GO:0042128">
    <property type="term" value="P:nitrate assimilation"/>
    <property type="evidence" value="ECO:0007669"/>
    <property type="project" value="UniProtKB-KW"/>
</dbReference>
<dbReference type="CDD" id="cd19943">
    <property type="entry name" value="NirB_Fer2_BFD-like_1"/>
    <property type="match status" value="1"/>
</dbReference>
<dbReference type="CDD" id="cd19944">
    <property type="entry name" value="NirB_Fer2_BFD-like_2"/>
    <property type="match status" value="1"/>
</dbReference>
<dbReference type="FunFam" id="3.50.50.60:FF:000033">
    <property type="entry name" value="Nitrite reductase [NAD(P)H], large subunit"/>
    <property type="match status" value="1"/>
</dbReference>
<dbReference type="FunFam" id="3.50.50.60:FF:000162">
    <property type="entry name" value="Nitrite reductase [NAD(P)H], large subunit"/>
    <property type="match status" value="1"/>
</dbReference>
<dbReference type="FunFam" id="1.10.10.1100:FF:000002">
    <property type="entry name" value="Nitrite reductase large subunit"/>
    <property type="match status" value="1"/>
</dbReference>
<dbReference type="Gene3D" id="3.30.390.30">
    <property type="match status" value="1"/>
</dbReference>
<dbReference type="Gene3D" id="1.10.10.1100">
    <property type="entry name" value="BFD-like [2Fe-2S]-binding domain"/>
    <property type="match status" value="1"/>
</dbReference>
<dbReference type="Gene3D" id="3.50.50.60">
    <property type="entry name" value="FAD/NAD(P)-binding domain"/>
    <property type="match status" value="2"/>
</dbReference>
<dbReference type="Gene3D" id="3.30.413.10">
    <property type="entry name" value="Sulfite Reductase Hemoprotein, domain 1"/>
    <property type="match status" value="1"/>
</dbReference>
<dbReference type="InterPro" id="IPR007419">
    <property type="entry name" value="BFD-like_2Fe2S-bd_dom"/>
</dbReference>
<dbReference type="InterPro" id="IPR041854">
    <property type="entry name" value="BFD-like_2Fe2S-bd_dom_sf"/>
</dbReference>
<dbReference type="InterPro" id="IPR050260">
    <property type="entry name" value="FAD-bd_OxRdtase"/>
</dbReference>
<dbReference type="InterPro" id="IPR036188">
    <property type="entry name" value="FAD/NAD-bd_sf"/>
</dbReference>
<dbReference type="InterPro" id="IPR023753">
    <property type="entry name" value="FAD/NAD-binding_dom"/>
</dbReference>
<dbReference type="InterPro" id="IPR016156">
    <property type="entry name" value="FAD/NAD-linked_Rdtase_dimer_sf"/>
</dbReference>
<dbReference type="InterPro" id="IPR005117">
    <property type="entry name" value="NiRdtase/SiRdtase_haem-b_fer"/>
</dbReference>
<dbReference type="InterPro" id="IPR036136">
    <property type="entry name" value="Nit/Sulf_reduc_fer-like_dom_sf"/>
</dbReference>
<dbReference type="InterPro" id="IPR012744">
    <property type="entry name" value="Nitri_red_NirB"/>
</dbReference>
<dbReference type="InterPro" id="IPR017121">
    <property type="entry name" value="Nitrite_Rdtase_lsu"/>
</dbReference>
<dbReference type="InterPro" id="IPR006067">
    <property type="entry name" value="NO2/SO3_Rdtase_4Fe4S_dom"/>
</dbReference>
<dbReference type="InterPro" id="IPR045854">
    <property type="entry name" value="NO2/SO3_Rdtase_4Fe4S_sf"/>
</dbReference>
<dbReference type="InterPro" id="IPR041575">
    <property type="entry name" value="Rubredoxin_C"/>
</dbReference>
<dbReference type="NCBIfam" id="TIGR02374">
    <property type="entry name" value="nitri_red_nirB"/>
    <property type="match status" value="1"/>
</dbReference>
<dbReference type="PANTHER" id="PTHR43429:SF3">
    <property type="entry name" value="NITRITE REDUCTASE [NAD(P)H]"/>
    <property type="match status" value="1"/>
</dbReference>
<dbReference type="PANTHER" id="PTHR43429">
    <property type="entry name" value="PYRIDINE NUCLEOTIDE-DISULFIDE OXIDOREDUCTASE DOMAIN-CONTAINING"/>
    <property type="match status" value="1"/>
</dbReference>
<dbReference type="Pfam" id="PF04324">
    <property type="entry name" value="Fer2_BFD"/>
    <property type="match status" value="2"/>
</dbReference>
<dbReference type="Pfam" id="PF01077">
    <property type="entry name" value="NIR_SIR"/>
    <property type="match status" value="1"/>
</dbReference>
<dbReference type="Pfam" id="PF03460">
    <property type="entry name" value="NIR_SIR_ferr"/>
    <property type="match status" value="1"/>
</dbReference>
<dbReference type="Pfam" id="PF07992">
    <property type="entry name" value="Pyr_redox_2"/>
    <property type="match status" value="1"/>
</dbReference>
<dbReference type="Pfam" id="PF18267">
    <property type="entry name" value="Rubredoxin_C"/>
    <property type="match status" value="1"/>
</dbReference>
<dbReference type="PIRSF" id="PIRSF037149">
    <property type="entry name" value="NirB"/>
    <property type="match status" value="1"/>
</dbReference>
<dbReference type="PRINTS" id="PR00368">
    <property type="entry name" value="FADPNR"/>
</dbReference>
<dbReference type="PRINTS" id="PR00411">
    <property type="entry name" value="PNDRDTASEI"/>
</dbReference>
<dbReference type="SUPFAM" id="SSF51905">
    <property type="entry name" value="FAD/NAD(P)-binding domain"/>
    <property type="match status" value="2"/>
</dbReference>
<dbReference type="SUPFAM" id="SSF56014">
    <property type="entry name" value="Nitrite and sulphite reductase 4Fe-4S domain-like"/>
    <property type="match status" value="1"/>
</dbReference>
<dbReference type="SUPFAM" id="SSF55124">
    <property type="entry name" value="Nitrite/Sulfite reductase N-terminal domain-like"/>
    <property type="match status" value="1"/>
</dbReference>
<keyword id="KW-0001">2Fe-2S</keyword>
<keyword id="KW-0249">Electron transport</keyword>
<keyword id="KW-0274">FAD</keyword>
<keyword id="KW-0285">Flavoprotein</keyword>
<keyword id="KW-0408">Iron</keyword>
<keyword id="KW-0411">Iron-sulfur</keyword>
<keyword id="KW-0479">Metal-binding</keyword>
<keyword id="KW-0521">NADP</keyword>
<keyword id="KW-0534">Nitrate assimilation</keyword>
<keyword id="KW-1185">Reference proteome</keyword>
<keyword id="KW-0813">Transport</keyword>
<sequence>MKKQRLVLAGNGMAGIRCIEEVLKLNRHMFEIVIFGSEPHPNYNRILLSSVLQGEASLDDITLNSKDWYDKHGITLYTGETVIQIDTDQQQVITDRKRTLSYDKLIVATGSSPHILPIPGADKKGVYGFRTIEDCQALMNMAQHFQKAAVIGAGLLGLEAAVGLQHLGMDVSVIHHSAGIMQKQLDQTAARLLQTELEQKGLTFLLEKDTVSISGATKADRIHFKDGSSLKADLIVMAAGVKPNIELAVSAGIKVNRGIIVNDFMQTSEPNIYAVGECAEHNGTVYGLVAPLYEQGKALASHICGVPCEEYQGSAPSAALKIAGIDVWSAGKIQEDERTTSIKIYDEQAGVYKKALFVDDKLAGVILFGDTRDKQRLLDSLLKQRDISIAKKQIIEPETSGPLFESMPSSETICQCNTVTKGAIEDAVHTNSLTTVEEVKHCTKATGSCGGCKPLVEDLLRYMTNSEYTKPASTPSFCSCTDFTEDDIIAELQRRPFTNPAEVMNQLDWKTKNGCSTCVPAIQYYLEMLYPGFVQPEPATEETCILIPQMYGGRTNAEQLRTIANIIEAYSIPDVSITHGQRLKLSGIKPADLPNMKKDLKMPVYTNEHRHALQSIKACTCGQNRSIQQLAAQIERQLEMLPLPAPISISLSCETDCTEAALQDVGAIRTQAGWDIHIGGVRGTHARSGALFCVTENEDSTAGMIKGLIQYYRETAHYLEGVHQWIDRLGIVHIREVLFEEDLRAQLLESLQTDLSLIQNPTVETGAYKKG</sequence>
<reference key="1">
    <citation type="journal article" date="1995" name="J. Bacteriol.">
        <title>The nasB operon and nasA gene are required for nitrate/nitrite assimilation in Bacillus subtilis.</title>
        <authorList>
            <person name="Ogawa K."/>
            <person name="Akagawa E."/>
            <person name="Yamane K."/>
            <person name="Sun Z.-W."/>
            <person name="Lacelle M."/>
            <person name="Zuber P."/>
            <person name="Nakano M.M."/>
        </authorList>
    </citation>
    <scope>NUCLEOTIDE SEQUENCE [GENOMIC DNA]</scope>
    <scope>FUNCTION</scope>
    <source>
        <strain>168</strain>
    </source>
</reference>
<reference key="2">
    <citation type="journal article" date="1996" name="Microbiology">
        <title>The 25 degrees-36 degrees region of the Bacillus subtilis chromosome: determination of the sequence of a 146 kb segment and identification of 113 genes.</title>
        <authorList>
            <person name="Yamane K."/>
            <person name="Kumano M."/>
            <person name="Kurita K."/>
        </authorList>
    </citation>
    <scope>NUCLEOTIDE SEQUENCE [GENOMIC DNA]</scope>
    <source>
        <strain>168</strain>
    </source>
</reference>
<reference key="3">
    <citation type="journal article" date="1997" name="Nature">
        <title>The complete genome sequence of the Gram-positive bacterium Bacillus subtilis.</title>
        <authorList>
            <person name="Kunst F."/>
            <person name="Ogasawara N."/>
            <person name="Moszer I."/>
            <person name="Albertini A.M."/>
            <person name="Alloni G."/>
            <person name="Azevedo V."/>
            <person name="Bertero M.G."/>
            <person name="Bessieres P."/>
            <person name="Bolotin A."/>
            <person name="Borchert S."/>
            <person name="Borriss R."/>
            <person name="Boursier L."/>
            <person name="Brans A."/>
            <person name="Braun M."/>
            <person name="Brignell S.C."/>
            <person name="Bron S."/>
            <person name="Brouillet S."/>
            <person name="Bruschi C.V."/>
            <person name="Caldwell B."/>
            <person name="Capuano V."/>
            <person name="Carter N.M."/>
            <person name="Choi S.-K."/>
            <person name="Codani J.-J."/>
            <person name="Connerton I.F."/>
            <person name="Cummings N.J."/>
            <person name="Daniel R.A."/>
            <person name="Denizot F."/>
            <person name="Devine K.M."/>
            <person name="Duesterhoeft A."/>
            <person name="Ehrlich S.D."/>
            <person name="Emmerson P.T."/>
            <person name="Entian K.-D."/>
            <person name="Errington J."/>
            <person name="Fabret C."/>
            <person name="Ferrari E."/>
            <person name="Foulger D."/>
            <person name="Fritz C."/>
            <person name="Fujita M."/>
            <person name="Fujita Y."/>
            <person name="Fuma S."/>
            <person name="Galizzi A."/>
            <person name="Galleron N."/>
            <person name="Ghim S.-Y."/>
            <person name="Glaser P."/>
            <person name="Goffeau A."/>
            <person name="Golightly E.J."/>
            <person name="Grandi G."/>
            <person name="Guiseppi G."/>
            <person name="Guy B.J."/>
            <person name="Haga K."/>
            <person name="Haiech J."/>
            <person name="Harwood C.R."/>
            <person name="Henaut A."/>
            <person name="Hilbert H."/>
            <person name="Holsappel S."/>
            <person name="Hosono S."/>
            <person name="Hullo M.-F."/>
            <person name="Itaya M."/>
            <person name="Jones L.-M."/>
            <person name="Joris B."/>
            <person name="Karamata D."/>
            <person name="Kasahara Y."/>
            <person name="Klaerr-Blanchard M."/>
            <person name="Klein C."/>
            <person name="Kobayashi Y."/>
            <person name="Koetter P."/>
            <person name="Koningstein G."/>
            <person name="Krogh S."/>
            <person name="Kumano M."/>
            <person name="Kurita K."/>
            <person name="Lapidus A."/>
            <person name="Lardinois S."/>
            <person name="Lauber J."/>
            <person name="Lazarevic V."/>
            <person name="Lee S.-M."/>
            <person name="Levine A."/>
            <person name="Liu H."/>
            <person name="Masuda S."/>
            <person name="Mauel C."/>
            <person name="Medigue C."/>
            <person name="Medina N."/>
            <person name="Mellado R.P."/>
            <person name="Mizuno M."/>
            <person name="Moestl D."/>
            <person name="Nakai S."/>
            <person name="Noback M."/>
            <person name="Noone D."/>
            <person name="O'Reilly M."/>
            <person name="Ogawa K."/>
            <person name="Ogiwara A."/>
            <person name="Oudega B."/>
            <person name="Park S.-H."/>
            <person name="Parro V."/>
            <person name="Pohl T.M."/>
            <person name="Portetelle D."/>
            <person name="Porwollik S."/>
            <person name="Prescott A.M."/>
            <person name="Presecan E."/>
            <person name="Pujic P."/>
            <person name="Purnelle B."/>
            <person name="Rapoport G."/>
            <person name="Rey M."/>
            <person name="Reynolds S."/>
            <person name="Rieger M."/>
            <person name="Rivolta C."/>
            <person name="Rocha E."/>
            <person name="Roche B."/>
            <person name="Rose M."/>
            <person name="Sadaie Y."/>
            <person name="Sato T."/>
            <person name="Scanlan E."/>
            <person name="Schleich S."/>
            <person name="Schroeter R."/>
            <person name="Scoffone F."/>
            <person name="Sekiguchi J."/>
            <person name="Sekowska A."/>
            <person name="Seror S.J."/>
            <person name="Serror P."/>
            <person name="Shin B.-S."/>
            <person name="Soldo B."/>
            <person name="Sorokin A."/>
            <person name="Tacconi E."/>
            <person name="Takagi T."/>
            <person name="Takahashi H."/>
            <person name="Takemaru K."/>
            <person name="Takeuchi M."/>
            <person name="Tamakoshi A."/>
            <person name="Tanaka T."/>
            <person name="Terpstra P."/>
            <person name="Tognoni A."/>
            <person name="Tosato V."/>
            <person name="Uchiyama S."/>
            <person name="Vandenbol M."/>
            <person name="Vannier F."/>
            <person name="Vassarotti A."/>
            <person name="Viari A."/>
            <person name="Wambutt R."/>
            <person name="Wedler E."/>
            <person name="Wedler H."/>
            <person name="Weitzenegger T."/>
            <person name="Winters P."/>
            <person name="Wipat A."/>
            <person name="Yamamoto H."/>
            <person name="Yamane K."/>
            <person name="Yasumoto K."/>
            <person name="Yata K."/>
            <person name="Yoshida K."/>
            <person name="Yoshikawa H.-F."/>
            <person name="Zumstein E."/>
            <person name="Yoshikawa H."/>
            <person name="Danchin A."/>
        </authorList>
    </citation>
    <scope>NUCLEOTIDE SEQUENCE [LARGE SCALE GENOMIC DNA]</scope>
    <source>
        <strain>168</strain>
    </source>
</reference>
<reference key="4">
    <citation type="journal article" date="2009" name="Microbiology">
        <title>From a consortium sequence to a unified sequence: the Bacillus subtilis 168 reference genome a decade later.</title>
        <authorList>
            <person name="Barbe V."/>
            <person name="Cruveiller S."/>
            <person name="Kunst F."/>
            <person name="Lenoble P."/>
            <person name="Meurice G."/>
            <person name="Sekowska A."/>
            <person name="Vallenet D."/>
            <person name="Wang T."/>
            <person name="Moszer I."/>
            <person name="Medigue C."/>
            <person name="Danchin A."/>
        </authorList>
    </citation>
    <scope>SEQUENCE REVISION TO 363-364 AND 716</scope>
</reference>
<reference key="5">
    <citation type="journal article" date="2000" name="J. Mol. Biol.">
        <title>Purification and in vitro activities of the Bacillus subtilis TnrA transcription factor.</title>
        <authorList>
            <person name="Wray L.V. Jr."/>
            <person name="Zalieckas J.M."/>
            <person name="Fisher S.H."/>
        </authorList>
    </citation>
    <scope>INDUCTION BY TNRA</scope>
    <source>
        <strain>168</strain>
    </source>
</reference>
<reference key="6">
    <citation type="journal article" date="2003" name="Mol. Microbiol.">
        <title>Identification of additional TnrA-regulated genes of Bacillus subtilis associated with a TnrA box.</title>
        <authorList>
            <person name="Yoshida K."/>
            <person name="Yamaguchi H."/>
            <person name="Kinehara M."/>
            <person name="Ohki Y.-H."/>
            <person name="Nakaura Y."/>
            <person name="Fujita Y."/>
        </authorList>
    </citation>
    <scope>INDUCTION BY TNRA</scope>
</reference>
<proteinExistence type="evidence at transcript level"/>
<name>NASB_BACSU</name>